<gene>
    <name evidence="9" type="primary">MET1A</name>
    <name evidence="8" type="synonym">MET1-1</name>
    <name evidence="13" type="ordered locus">Os03g0798300</name>
    <name evidence="12" type="ordered locus">LOC_Os03g58400</name>
    <name evidence="14" type="ORF">OsJ_12965</name>
    <name evidence="11" type="ORF">OSJNBa0094F01.4</name>
</gene>
<comment type="function">
    <text evidence="5 7">Probably methylates CpG residues and maintains DNA methylation (PubMed:14513380, PubMed:24535433). May be involved in methylation-dependent gene silencing (PubMed:14513380). May play a minor role in the maintenance of DNA methylation (PubMed:24535433).</text>
</comment>
<comment type="catalytic activity">
    <reaction evidence="3">
        <text>a 2'-deoxycytidine in DNA + S-adenosyl-L-methionine = a 5-methyl-2'-deoxycytidine in DNA + S-adenosyl-L-homocysteine + H(+)</text>
        <dbReference type="Rhea" id="RHEA:13681"/>
        <dbReference type="Rhea" id="RHEA-COMP:11369"/>
        <dbReference type="Rhea" id="RHEA-COMP:11370"/>
        <dbReference type="ChEBI" id="CHEBI:15378"/>
        <dbReference type="ChEBI" id="CHEBI:57856"/>
        <dbReference type="ChEBI" id="CHEBI:59789"/>
        <dbReference type="ChEBI" id="CHEBI:85452"/>
        <dbReference type="ChEBI" id="CHEBI:85454"/>
        <dbReference type="EC" id="2.1.1.37"/>
    </reaction>
</comment>
<comment type="subcellular location">
    <subcellularLocation>
        <location evidence="10">Nucleus</location>
    </subcellularLocation>
</comment>
<comment type="alternative products">
    <event type="alternative splicing"/>
    <isoform>
        <id>Q7Y1I7-1</id>
        <name>1</name>
        <sequence type="displayed"/>
    </isoform>
    <isoform>
        <id>Q7Y1I7-2</id>
        <name>2</name>
        <sequence type="described" ref="VSP_037849 VSP_037850"/>
    </isoform>
</comment>
<comment type="tissue specificity">
    <text evidence="5 6 7">Expressed in roots and inflorescences (PubMed:14513380). Expressed in roots, panicles, anthers, pistils, endosperm and imbibed embryos (PubMed:18281124). Expressed in tissues containing actively replicating and dividing cells, such as shoot and root meristems (PubMed:24535433).</text>
</comment>
<comment type="disruption phenotype">
    <text evidence="7">No visible phenotype under normal growth conditions.</text>
</comment>
<comment type="similarity">
    <text evidence="2">Belongs to the class I-like SAM-binding methyltransferase superfamily. C5-methyltransferase family.</text>
</comment>
<comment type="sequence caution" evidence="10">
    <conflict type="erroneous gene model prediction">
        <sequence resource="EMBL-CDS" id="ABF99362"/>
    </conflict>
</comment>
<comment type="sequence caution" evidence="10">
    <conflict type="erroneous gene model prediction">
        <sequence resource="EMBL-CDS" id="BAF13483"/>
    </conflict>
</comment>
<comment type="sequence caution" evidence="10">
    <conflict type="erroneous initiation">
        <sequence resource="EMBL-CDS" id="BAG98259"/>
    </conflict>
    <text>Truncated N-terminus.</text>
</comment>
<accession>Q7Y1I7</accession>
<accession>A0A0P0W479</accession>
<accession>Q0DMQ5</accession>
<accession>Q10C15</accession>
<accession>Q8S4C3</accession>
<keyword id="KW-0025">Alternative splicing</keyword>
<keyword id="KW-0238">DNA-binding</keyword>
<keyword id="KW-0489">Methyltransferase</keyword>
<keyword id="KW-0539">Nucleus</keyword>
<keyword id="KW-1185">Reference proteome</keyword>
<keyword id="KW-0677">Repeat</keyword>
<keyword id="KW-0949">S-adenosyl-L-methionine</keyword>
<keyword id="KW-0808">Transferase</keyword>
<proteinExistence type="evidence at transcript level"/>
<protein>
    <recommendedName>
        <fullName evidence="9">DNA (cytosine-5)-methyltransferase 1A</fullName>
        <shortName evidence="9">OsMET1a</shortName>
        <ecNumber evidence="2">2.1.1.37</ecNumber>
    </recommendedName>
    <alternativeName>
        <fullName evidence="8">DNA methyltransferase 1-1</fullName>
        <shortName evidence="8">OsMET1-1</shortName>
    </alternativeName>
</protein>
<evidence type="ECO:0000255" key="1">
    <source>
        <dbReference type="PROSITE-ProRule" id="PRU00370"/>
    </source>
</evidence>
<evidence type="ECO:0000255" key="2">
    <source>
        <dbReference type="PROSITE-ProRule" id="PRU01016"/>
    </source>
</evidence>
<evidence type="ECO:0000255" key="3">
    <source>
        <dbReference type="PROSITE-ProRule" id="PRU10018"/>
    </source>
</evidence>
<evidence type="ECO:0000256" key="4">
    <source>
        <dbReference type="SAM" id="MobiDB-lite"/>
    </source>
</evidence>
<evidence type="ECO:0000269" key="5">
    <source>
    </source>
</evidence>
<evidence type="ECO:0000269" key="6">
    <source>
    </source>
</evidence>
<evidence type="ECO:0000269" key="7">
    <source>
    </source>
</evidence>
<evidence type="ECO:0000303" key="8">
    <source>
    </source>
</evidence>
<evidence type="ECO:0000303" key="9">
    <source>
    </source>
</evidence>
<evidence type="ECO:0000305" key="10"/>
<evidence type="ECO:0000312" key="11">
    <source>
        <dbReference type="EMBL" id="AAP44671.1"/>
    </source>
</evidence>
<evidence type="ECO:0000312" key="12">
    <source>
        <dbReference type="EMBL" id="ABF99362.1"/>
    </source>
</evidence>
<evidence type="ECO:0000312" key="13">
    <source>
        <dbReference type="EMBL" id="BAS86863.1"/>
    </source>
</evidence>
<evidence type="ECO:0000312" key="14">
    <source>
        <dbReference type="EMBL" id="EEE60102.1"/>
    </source>
</evidence>
<sequence length="1527" mass="170856">MAKSPRSVVTTGTKRRRAKVHKEDEPVENENLESEFDVSKKESNGATEPGNEPVASKRPKRAAACSNFKEKSLDLSEKDSIITIKESRVEEKEIEAVNLTRTGPEDGQPCRKIIDFILHDGDGNLQPFEMSEVDDIFITALIMPLDDDLEKDRGKGICCSGFGRIENWAISGYDEGAAVIWVSTETSDYKCVKPASSYRSYFEHFSEKARVCVEVYKKLARSVGGNPQVDLEELIAGVVRSINSNRSFNGTVTKDFVISSGEFIYKQLIGLDHTAGNDDEMLATLPVLVALKDECKSRAGFTHLPAMPSNGTLRIKDGQDKGLTEDEDAKLARLLQEEEEWKMMKQRGKRGTSQKNIYIKICETEIANDYPLPAYYKPYNQEMDEYIFDSDIGMYSDDVPVRILDNWALYNSDSRLISLELIPMKAGAENDIVVFGSGFMREDDGSCCSTAELAQLHSSSSKSGREDPGVPIYLSPIKEWVVEFGGSMICITIRTDVAWYKLRQPTKQYAPWCEPVLKTARLAVSIITLLKEQSRASKLSFAEVIKKVAEFDSRHPAFISSKAPTVERYVVVHGQIILQQFADFPDESVKRCAFITGLLAKMEESRHTKLAIKKKSQQMRGENLNPSAKMGPILRKKLMRATTTMLISKIWGEYYATYFPGDTKEEDQNEPKEIDDDQEENEDNDAEEEVNVQDEKATRTPPSTRSRKSSADTRKEIKWEGQTAGKTVSGEVLYKCVIVQDLSISVGATVTTEDDSGETIMCFVEYMYEKLDGKNMIHGIILQEGSQTVLGNAANDREVFLTNDCLEFEASDIKELVTVNIQSLPWGHKYRKENSEAKRIEKAKAEERKRKGLPVEYICKSLYWPEKGGFFSLPYDKIGNGTGICSSCERKPVGNEFKLLSESSFVFENITYNIHDFLYIRPEFFSQGEGHETYKAGRNVGLKPYAVCHLLSVHGPAGSRKANPESTKVKVRRFYRPDDISSTKAYSSDIREVYYSEDIISVPVVMIEGKCEVRLKDDLPNSDLPAVVEHVFCCEYLYDPANGALKQLPPNVRLVTLTRKVPASKKNKGKQICDIELGGSDKPKDGQSENCLATLDIFAGCGGLSEGLQRSGLSLTKWAIEYEEPAGDAFGENHPEAAVFVENCNVILKAIMDKCGDSDDCISTSEAAERAAKLSEDKIKNLPVPGEVEFINGGPPCQGFSGMNRFNQSPWSKVQCEMILAFLSFAEYFRPRFFLLENVRNFVSFNKGQTFRLTLASLLEMGYQVRFGILEAGAYGVAQSRKRAFIWAAAPGETLPEWPEPMHVFASPELKITLPDGKFYAAVKSTAAGAPFRSITVRDTIGDLPAVENGAGKPTIQYGSGPVSWFQKKIRSDMASLNDHISKEMNELNLIRCKHIPKRPGCDWHDLPDEKVKLSTGQMVDLIPWCLPNTAKRHNQWKGLYGRLDWEGNFPTSVTDPQPMGKVGMCFHPEQDRIITVRECARSQGFPDSYRFAGNIQNKHRQIGNAVPPPLAYALGRKLKQAIDAKR</sequence>
<name>DNM1A_ORYSJ</name>
<feature type="chain" id="PRO_0000381939" description="DNA (cytosine-5)-methyltransferase 1A">
    <location>
        <begin position="1"/>
        <end position="1527"/>
    </location>
</feature>
<feature type="domain" description="BAH 1" evidence="1">
    <location>
        <begin position="742"/>
        <end position="874"/>
    </location>
</feature>
<feature type="domain" description="BAH 2" evidence="1">
    <location>
        <begin position="910"/>
        <end position="1049"/>
    </location>
</feature>
<feature type="domain" description="SAM-dependent MTase C5-type" evidence="2">
    <location>
        <begin position="1092"/>
        <end position="1526"/>
    </location>
</feature>
<feature type="region of interest" description="Disordered" evidence="4">
    <location>
        <begin position="1"/>
        <end position="62"/>
    </location>
</feature>
<feature type="region of interest" description="Disordered" evidence="4">
    <location>
        <begin position="661"/>
        <end position="718"/>
    </location>
</feature>
<feature type="compositionally biased region" description="Acidic residues" evidence="4">
    <location>
        <begin position="25"/>
        <end position="36"/>
    </location>
</feature>
<feature type="compositionally biased region" description="Acidic residues" evidence="4">
    <location>
        <begin position="664"/>
        <end position="692"/>
    </location>
</feature>
<feature type="compositionally biased region" description="Basic and acidic residues" evidence="4">
    <location>
        <begin position="709"/>
        <end position="718"/>
    </location>
</feature>
<feature type="active site" evidence="2">
    <location>
        <position position="1197"/>
    </location>
</feature>
<feature type="splice variant" id="VSP_037849" description="In isoform 2." evidence="10">
    <location>
        <begin position="1"/>
        <end position="5"/>
    </location>
</feature>
<feature type="splice variant" id="VSP_037850" description="In isoform 2." evidence="10">
    <original>RSVVTT</original>
    <variation>MDTCLY</variation>
    <location>
        <begin position="6"/>
        <end position="11"/>
    </location>
</feature>
<dbReference type="EC" id="2.1.1.37" evidence="2"/>
<dbReference type="EMBL" id="AF462029">
    <property type="protein sequence ID" value="AAL77415.1"/>
    <property type="molecule type" value="Genomic_DNA"/>
</dbReference>
<dbReference type="EMBL" id="AB362510">
    <property type="protein sequence ID" value="BAG15928.1"/>
    <property type="molecule type" value="Genomic_DNA"/>
</dbReference>
<dbReference type="EMBL" id="AC093713">
    <property type="protein sequence ID" value="AAP44671.1"/>
    <property type="molecule type" value="Genomic_DNA"/>
</dbReference>
<dbReference type="EMBL" id="DP000009">
    <property type="protein sequence ID" value="ABF99362.1"/>
    <property type="status" value="ALT_SEQ"/>
    <property type="molecule type" value="Genomic_DNA"/>
</dbReference>
<dbReference type="EMBL" id="AP008209">
    <property type="protein sequence ID" value="BAF13483.1"/>
    <property type="status" value="ALT_SEQ"/>
    <property type="molecule type" value="Genomic_DNA"/>
</dbReference>
<dbReference type="EMBL" id="AP014959">
    <property type="protein sequence ID" value="BAS86863.1"/>
    <property type="molecule type" value="Genomic_DNA"/>
</dbReference>
<dbReference type="EMBL" id="AP014959">
    <property type="protein sequence ID" value="BAS86864.1"/>
    <property type="molecule type" value="Genomic_DNA"/>
</dbReference>
<dbReference type="EMBL" id="CM000140">
    <property type="protein sequence ID" value="EEE60102.1"/>
    <property type="molecule type" value="Genomic_DNA"/>
</dbReference>
<dbReference type="EMBL" id="AK108034">
    <property type="protein sequence ID" value="BAG98259.1"/>
    <property type="status" value="ALT_INIT"/>
    <property type="molecule type" value="mRNA"/>
</dbReference>
<dbReference type="RefSeq" id="XP_015628331.1">
    <property type="nucleotide sequence ID" value="XM_015772845.1"/>
</dbReference>
<dbReference type="RefSeq" id="XP_015628332.1">
    <property type="nucleotide sequence ID" value="XM_015772846.1"/>
</dbReference>
<dbReference type="RefSeq" id="XP_015628333.1">
    <molecule id="Q7Y1I7-1"/>
    <property type="nucleotide sequence ID" value="XM_015772847.1"/>
</dbReference>
<dbReference type="SMR" id="Q7Y1I7"/>
<dbReference type="FunCoup" id="Q7Y1I7">
    <property type="interactions" value="1143"/>
</dbReference>
<dbReference type="STRING" id="39947.Q7Y1I7"/>
<dbReference type="REBASE" id="7658">
    <property type="entry name" value="M.OsaDnmt1A"/>
</dbReference>
<dbReference type="PaxDb" id="39947-Q7Y1I7"/>
<dbReference type="EnsemblPlants" id="Os03t0798300-02">
    <molecule id="Q7Y1I7-1"/>
    <property type="protein sequence ID" value="Os03t0798300-02"/>
    <property type="gene ID" value="Os03g0798300"/>
</dbReference>
<dbReference type="EnsemblPlants" id="Os03t0798300-03">
    <molecule id="Q7Y1I7-1"/>
    <property type="protein sequence ID" value="Os03t0798300-03"/>
    <property type="gene ID" value="Os03g0798300"/>
</dbReference>
<dbReference type="EnsemblPlants" id="Os03t0798300-04">
    <molecule id="Q7Y1I7-1"/>
    <property type="protein sequence ID" value="Os03t0798300-04"/>
    <property type="gene ID" value="Os03g0798300"/>
</dbReference>
<dbReference type="GeneID" id="4334435"/>
<dbReference type="Gramene" id="Os03t0798300-02">
    <molecule id="Q7Y1I7-1"/>
    <property type="protein sequence ID" value="Os03t0798300-02"/>
    <property type="gene ID" value="Os03g0798300"/>
</dbReference>
<dbReference type="Gramene" id="Os03t0798300-03">
    <molecule id="Q7Y1I7-1"/>
    <property type="protein sequence ID" value="Os03t0798300-03"/>
    <property type="gene ID" value="Os03g0798300"/>
</dbReference>
<dbReference type="Gramene" id="Os03t0798300-04">
    <molecule id="Q7Y1I7-1"/>
    <property type="protein sequence ID" value="Os03t0798300-04"/>
    <property type="gene ID" value="Os03g0798300"/>
</dbReference>
<dbReference type="KEGG" id="dosa:Os03g0798300"/>
<dbReference type="KEGG" id="osa:4334435"/>
<dbReference type="eggNOG" id="ENOG502QPKK">
    <property type="taxonomic scope" value="Eukaryota"/>
</dbReference>
<dbReference type="HOGENOM" id="CLU_006958_2_3_1"/>
<dbReference type="InParanoid" id="Q7Y1I7"/>
<dbReference type="OrthoDB" id="5376140at2759"/>
<dbReference type="BRENDA" id="2.1.1.37">
    <property type="organism ID" value="4460"/>
</dbReference>
<dbReference type="Proteomes" id="UP000000763">
    <property type="component" value="Chromosome 3"/>
</dbReference>
<dbReference type="Proteomes" id="UP000007752">
    <property type="component" value="Chromosome 3"/>
</dbReference>
<dbReference type="Proteomes" id="UP000059680">
    <property type="component" value="Chromosome 3"/>
</dbReference>
<dbReference type="GO" id="GO:0005634">
    <property type="term" value="C:nucleus"/>
    <property type="evidence" value="ECO:0000318"/>
    <property type="project" value="GO_Central"/>
</dbReference>
<dbReference type="GO" id="GO:0003682">
    <property type="term" value="F:chromatin binding"/>
    <property type="evidence" value="ECO:0007669"/>
    <property type="project" value="InterPro"/>
</dbReference>
<dbReference type="GO" id="GO:0003886">
    <property type="term" value="F:DNA (cytosine-5-)-methyltransferase activity"/>
    <property type="evidence" value="ECO:0000318"/>
    <property type="project" value="GO_Central"/>
</dbReference>
<dbReference type="GO" id="GO:0051718">
    <property type="term" value="F:DNA (cytosine-5-)-methyltransferase activity, acting on CpG substrates"/>
    <property type="evidence" value="ECO:0000250"/>
    <property type="project" value="UniProtKB"/>
</dbReference>
<dbReference type="GO" id="GO:0003677">
    <property type="term" value="F:DNA binding"/>
    <property type="evidence" value="ECO:0000318"/>
    <property type="project" value="GO_Central"/>
</dbReference>
<dbReference type="GO" id="GO:0006346">
    <property type="term" value="P:DNA methylation-dependent constitutive heterochromatin formation"/>
    <property type="evidence" value="ECO:0000315"/>
    <property type="project" value="GO_Central"/>
</dbReference>
<dbReference type="GO" id="GO:0032259">
    <property type="term" value="P:methylation"/>
    <property type="evidence" value="ECO:0007669"/>
    <property type="project" value="UniProtKB-KW"/>
</dbReference>
<dbReference type="GO" id="GO:0044027">
    <property type="term" value="P:negative regulation of gene expression via chromosomal CpG island methylation"/>
    <property type="evidence" value="ECO:0000250"/>
    <property type="project" value="UniProtKB"/>
</dbReference>
<dbReference type="CDD" id="cd04708">
    <property type="entry name" value="BAH_plantDCM_II"/>
    <property type="match status" value="1"/>
</dbReference>
<dbReference type="FunFam" id="2.30.30.490:FF:000009">
    <property type="entry name" value="DNA (cytosine-5)-methyltransferase"/>
    <property type="match status" value="1"/>
</dbReference>
<dbReference type="FunFam" id="2.30.30.490:FF:000013">
    <property type="entry name" value="DNA (cytosine-5)-methyltransferase"/>
    <property type="match status" value="1"/>
</dbReference>
<dbReference type="FunFam" id="3.40.50.150:FF:000108">
    <property type="entry name" value="DNA (cytosine-5)-methyltransferase"/>
    <property type="match status" value="1"/>
</dbReference>
<dbReference type="FunFam" id="3.40.50.150:FF:000128">
    <property type="entry name" value="DNA (cytosine-5)-methyltransferase"/>
    <property type="match status" value="1"/>
</dbReference>
<dbReference type="FunFam" id="3.90.120.10:FF:000002">
    <property type="entry name" value="DNA (cytosine-5)-methyltransferase"/>
    <property type="match status" value="1"/>
</dbReference>
<dbReference type="FunFam" id="3.90.120.10:FF:000004">
    <property type="entry name" value="DNA (cytosine-5)-methyltransferase"/>
    <property type="match status" value="1"/>
</dbReference>
<dbReference type="Gene3D" id="2.30.30.490">
    <property type="match status" value="2"/>
</dbReference>
<dbReference type="Gene3D" id="3.90.120.10">
    <property type="entry name" value="DNA Methylase, subunit A, domain 2"/>
    <property type="match status" value="2"/>
</dbReference>
<dbReference type="Gene3D" id="3.40.50.150">
    <property type="entry name" value="Vaccinia Virus protein VP39"/>
    <property type="match status" value="1"/>
</dbReference>
<dbReference type="InterPro" id="IPR001025">
    <property type="entry name" value="BAH_dom"/>
</dbReference>
<dbReference type="InterPro" id="IPR043151">
    <property type="entry name" value="BAH_sf"/>
</dbReference>
<dbReference type="InterPro" id="IPR050390">
    <property type="entry name" value="C5-Methyltransferase"/>
</dbReference>
<dbReference type="InterPro" id="IPR018117">
    <property type="entry name" value="C5_DNA_meth_AS"/>
</dbReference>
<dbReference type="InterPro" id="IPR001525">
    <property type="entry name" value="C5_MeTfrase"/>
</dbReference>
<dbReference type="InterPro" id="IPR031303">
    <property type="entry name" value="C5_meth_CS"/>
</dbReference>
<dbReference type="InterPro" id="IPR022702">
    <property type="entry name" value="Cytosine_MeTrfase1_RFD"/>
</dbReference>
<dbReference type="InterPro" id="IPR017198">
    <property type="entry name" value="DNMT1-like"/>
</dbReference>
<dbReference type="InterPro" id="IPR029063">
    <property type="entry name" value="SAM-dependent_MTases_sf"/>
</dbReference>
<dbReference type="NCBIfam" id="TIGR00675">
    <property type="entry name" value="dcm"/>
    <property type="match status" value="1"/>
</dbReference>
<dbReference type="PANTHER" id="PTHR10629">
    <property type="entry name" value="CYTOSINE-SPECIFIC METHYLTRANSFERASE"/>
    <property type="match status" value="1"/>
</dbReference>
<dbReference type="PANTHER" id="PTHR10629:SF60">
    <property type="entry name" value="DNA (CYTOSINE-5)-METHYLTRANSFERASE 1A"/>
    <property type="match status" value="1"/>
</dbReference>
<dbReference type="Pfam" id="PF01426">
    <property type="entry name" value="BAH"/>
    <property type="match status" value="2"/>
</dbReference>
<dbReference type="Pfam" id="PF00145">
    <property type="entry name" value="DNA_methylase"/>
    <property type="match status" value="1"/>
</dbReference>
<dbReference type="Pfam" id="PF12047">
    <property type="entry name" value="DNMT1-RFD"/>
    <property type="match status" value="2"/>
</dbReference>
<dbReference type="PIRSF" id="PIRSF037404">
    <property type="entry name" value="DNMT1"/>
    <property type="match status" value="1"/>
</dbReference>
<dbReference type="PRINTS" id="PR00105">
    <property type="entry name" value="C5METTRFRASE"/>
</dbReference>
<dbReference type="SMART" id="SM00439">
    <property type="entry name" value="BAH"/>
    <property type="match status" value="2"/>
</dbReference>
<dbReference type="SUPFAM" id="SSF53335">
    <property type="entry name" value="S-adenosyl-L-methionine-dependent methyltransferases"/>
    <property type="match status" value="1"/>
</dbReference>
<dbReference type="PROSITE" id="PS51038">
    <property type="entry name" value="BAH"/>
    <property type="match status" value="2"/>
</dbReference>
<dbReference type="PROSITE" id="PS00094">
    <property type="entry name" value="C5_MTASE_1"/>
    <property type="match status" value="1"/>
</dbReference>
<dbReference type="PROSITE" id="PS00095">
    <property type="entry name" value="C5_MTASE_2"/>
    <property type="match status" value="1"/>
</dbReference>
<dbReference type="PROSITE" id="PS51679">
    <property type="entry name" value="SAM_MT_C5"/>
    <property type="match status" value="1"/>
</dbReference>
<organism>
    <name type="scientific">Oryza sativa subsp. japonica</name>
    <name type="common">Rice</name>
    <dbReference type="NCBI Taxonomy" id="39947"/>
    <lineage>
        <taxon>Eukaryota</taxon>
        <taxon>Viridiplantae</taxon>
        <taxon>Streptophyta</taxon>
        <taxon>Embryophyta</taxon>
        <taxon>Tracheophyta</taxon>
        <taxon>Spermatophyta</taxon>
        <taxon>Magnoliopsida</taxon>
        <taxon>Liliopsida</taxon>
        <taxon>Poales</taxon>
        <taxon>Poaceae</taxon>
        <taxon>BOP clade</taxon>
        <taxon>Oryzoideae</taxon>
        <taxon>Oryzeae</taxon>
        <taxon>Oryzinae</taxon>
        <taxon>Oryza</taxon>
        <taxon>Oryza sativa</taxon>
    </lineage>
</organism>
<reference key="1">
    <citation type="journal article" date="2004" name="Planta">
        <title>Characterization of two rice DNA methyltransferase genes and RNAi-mediated reactivation of a silenced transgene in rice callus.</title>
        <authorList>
            <person name="Teerawanichpan P."/>
            <person name="Chandrasekharan M.B."/>
            <person name="Jiang Y."/>
            <person name="Narangajavana J."/>
            <person name="Hall T.C."/>
        </authorList>
    </citation>
    <scope>NUCLEOTIDE SEQUENCE [GENOMIC DNA]</scope>
    <scope>FUNCTION</scope>
    <scope>TISSUE SPECIFICITY</scope>
    <source>
        <strain>cv. Nipponbare</strain>
    </source>
</reference>
<reference key="2">
    <citation type="journal article" date="2008" name="J. Plant Physiol.">
        <title>Alternative splicing of the rice OsMET1 genes encoding maintenance DNA methyltransferase.</title>
        <authorList>
            <person name="Yamauchi T."/>
            <person name="Moritoh S."/>
            <person name="Johzuka-Hisatomi Y."/>
            <person name="Ono A."/>
            <person name="Terada R."/>
            <person name="Nakamura I."/>
            <person name="Iida S."/>
        </authorList>
    </citation>
    <scope>NUCLEOTIDE SEQUENCE [GENOMIC DNA]</scope>
    <scope>TISSUE SPECIFICITY</scope>
    <source>
        <strain>cv. Nipponbare</strain>
    </source>
</reference>
<reference key="3">
    <citation type="journal article" date="2005" name="Genome Res.">
        <title>Sequence, annotation, and analysis of synteny between rice chromosome 3 and diverged grass species.</title>
        <authorList>
            <consortium name="The rice chromosome 3 sequencing consortium"/>
            <person name="Buell C.R."/>
            <person name="Yuan Q."/>
            <person name="Ouyang S."/>
            <person name="Liu J."/>
            <person name="Zhu W."/>
            <person name="Wang A."/>
            <person name="Maiti R."/>
            <person name="Haas B."/>
            <person name="Wortman J."/>
            <person name="Pertea M."/>
            <person name="Jones K.M."/>
            <person name="Kim M."/>
            <person name="Overton L."/>
            <person name="Tsitrin T."/>
            <person name="Fadrosh D."/>
            <person name="Bera J."/>
            <person name="Weaver B."/>
            <person name="Jin S."/>
            <person name="Johri S."/>
            <person name="Reardon M."/>
            <person name="Webb K."/>
            <person name="Hill J."/>
            <person name="Moffat K."/>
            <person name="Tallon L."/>
            <person name="Van Aken S."/>
            <person name="Lewis M."/>
            <person name="Utterback T."/>
            <person name="Feldblyum T."/>
            <person name="Zismann V."/>
            <person name="Iobst S."/>
            <person name="Hsiao J."/>
            <person name="de Vazeille A.R."/>
            <person name="Salzberg S.L."/>
            <person name="White O."/>
            <person name="Fraser C.M."/>
            <person name="Yu Y."/>
            <person name="Kim H."/>
            <person name="Rambo T."/>
            <person name="Currie J."/>
            <person name="Collura K."/>
            <person name="Kernodle-Thompson S."/>
            <person name="Wei F."/>
            <person name="Kudrna K."/>
            <person name="Ammiraju J.S.S."/>
            <person name="Luo M."/>
            <person name="Goicoechea J.L."/>
            <person name="Wing R.A."/>
            <person name="Henry D."/>
            <person name="Oates R."/>
            <person name="Palmer M."/>
            <person name="Pries G."/>
            <person name="Saski C."/>
            <person name="Simmons J."/>
            <person name="Soderlund C."/>
            <person name="Nelson W."/>
            <person name="de la Bastide M."/>
            <person name="Spiegel L."/>
            <person name="Nascimento L."/>
            <person name="Huang E."/>
            <person name="Preston R."/>
            <person name="Zutavern T."/>
            <person name="Palmer L."/>
            <person name="O'Shaughnessy A."/>
            <person name="Dike S."/>
            <person name="McCombie W.R."/>
            <person name="Minx P."/>
            <person name="Cordum H."/>
            <person name="Wilson R."/>
            <person name="Jin W."/>
            <person name="Lee H.R."/>
            <person name="Jiang J."/>
            <person name="Jackson S."/>
        </authorList>
    </citation>
    <scope>NUCLEOTIDE SEQUENCE [LARGE SCALE GENOMIC DNA]</scope>
    <source>
        <strain>cv. Nipponbare</strain>
    </source>
</reference>
<reference key="4">
    <citation type="journal article" date="2005" name="Nature">
        <title>The map-based sequence of the rice genome.</title>
        <authorList>
            <consortium name="International rice genome sequencing project (IRGSP)"/>
        </authorList>
    </citation>
    <scope>NUCLEOTIDE SEQUENCE [LARGE SCALE GENOMIC DNA]</scope>
    <source>
        <strain>cv. Nipponbare</strain>
    </source>
</reference>
<reference key="5">
    <citation type="journal article" date="2008" name="Nucleic Acids Res.">
        <title>The rice annotation project database (RAP-DB): 2008 update.</title>
        <authorList>
            <consortium name="The rice annotation project (RAP)"/>
        </authorList>
    </citation>
    <scope>GENOME REANNOTATION</scope>
    <source>
        <strain>cv. Nipponbare</strain>
    </source>
</reference>
<reference key="6">
    <citation type="journal article" date="2013" name="Rice">
        <title>Improvement of the Oryza sativa Nipponbare reference genome using next generation sequence and optical map data.</title>
        <authorList>
            <person name="Kawahara Y."/>
            <person name="de la Bastide M."/>
            <person name="Hamilton J.P."/>
            <person name="Kanamori H."/>
            <person name="McCombie W.R."/>
            <person name="Ouyang S."/>
            <person name="Schwartz D.C."/>
            <person name="Tanaka T."/>
            <person name="Wu J."/>
            <person name="Zhou S."/>
            <person name="Childs K.L."/>
            <person name="Davidson R.M."/>
            <person name="Lin H."/>
            <person name="Quesada-Ocampo L."/>
            <person name="Vaillancourt B."/>
            <person name="Sakai H."/>
            <person name="Lee S.S."/>
            <person name="Kim J."/>
            <person name="Numa H."/>
            <person name="Itoh T."/>
            <person name="Buell C.R."/>
            <person name="Matsumoto T."/>
        </authorList>
    </citation>
    <scope>GENOME REANNOTATION</scope>
    <source>
        <strain>cv. Nipponbare</strain>
    </source>
</reference>
<reference key="7">
    <citation type="journal article" date="2005" name="PLoS Biol.">
        <title>The genomes of Oryza sativa: a history of duplications.</title>
        <authorList>
            <person name="Yu J."/>
            <person name="Wang J."/>
            <person name="Lin W."/>
            <person name="Li S."/>
            <person name="Li H."/>
            <person name="Zhou J."/>
            <person name="Ni P."/>
            <person name="Dong W."/>
            <person name="Hu S."/>
            <person name="Zeng C."/>
            <person name="Zhang J."/>
            <person name="Zhang Y."/>
            <person name="Li R."/>
            <person name="Xu Z."/>
            <person name="Li S."/>
            <person name="Li X."/>
            <person name="Zheng H."/>
            <person name="Cong L."/>
            <person name="Lin L."/>
            <person name="Yin J."/>
            <person name="Geng J."/>
            <person name="Li G."/>
            <person name="Shi J."/>
            <person name="Liu J."/>
            <person name="Lv H."/>
            <person name="Li J."/>
            <person name="Wang J."/>
            <person name="Deng Y."/>
            <person name="Ran L."/>
            <person name="Shi X."/>
            <person name="Wang X."/>
            <person name="Wu Q."/>
            <person name="Li C."/>
            <person name="Ren X."/>
            <person name="Wang J."/>
            <person name="Wang X."/>
            <person name="Li D."/>
            <person name="Liu D."/>
            <person name="Zhang X."/>
            <person name="Ji Z."/>
            <person name="Zhao W."/>
            <person name="Sun Y."/>
            <person name="Zhang Z."/>
            <person name="Bao J."/>
            <person name="Han Y."/>
            <person name="Dong L."/>
            <person name="Ji J."/>
            <person name="Chen P."/>
            <person name="Wu S."/>
            <person name="Liu J."/>
            <person name="Xiao Y."/>
            <person name="Bu D."/>
            <person name="Tan J."/>
            <person name="Yang L."/>
            <person name="Ye C."/>
            <person name="Zhang J."/>
            <person name="Xu J."/>
            <person name="Zhou Y."/>
            <person name="Yu Y."/>
            <person name="Zhang B."/>
            <person name="Zhuang S."/>
            <person name="Wei H."/>
            <person name="Liu B."/>
            <person name="Lei M."/>
            <person name="Yu H."/>
            <person name="Li Y."/>
            <person name="Xu H."/>
            <person name="Wei S."/>
            <person name="He X."/>
            <person name="Fang L."/>
            <person name="Zhang Z."/>
            <person name="Zhang Y."/>
            <person name="Huang X."/>
            <person name="Su Z."/>
            <person name="Tong W."/>
            <person name="Li J."/>
            <person name="Tong Z."/>
            <person name="Li S."/>
            <person name="Ye J."/>
            <person name="Wang L."/>
            <person name="Fang L."/>
            <person name="Lei T."/>
            <person name="Chen C.-S."/>
            <person name="Chen H.-C."/>
            <person name="Xu Z."/>
            <person name="Li H."/>
            <person name="Huang H."/>
            <person name="Zhang F."/>
            <person name="Xu H."/>
            <person name="Li N."/>
            <person name="Zhao C."/>
            <person name="Li S."/>
            <person name="Dong L."/>
            <person name="Huang Y."/>
            <person name="Li L."/>
            <person name="Xi Y."/>
            <person name="Qi Q."/>
            <person name="Li W."/>
            <person name="Zhang B."/>
            <person name="Hu W."/>
            <person name="Zhang Y."/>
            <person name="Tian X."/>
            <person name="Jiao Y."/>
            <person name="Liang X."/>
            <person name="Jin J."/>
            <person name="Gao L."/>
            <person name="Zheng W."/>
            <person name="Hao B."/>
            <person name="Liu S.-M."/>
            <person name="Wang W."/>
            <person name="Yuan L."/>
            <person name="Cao M."/>
            <person name="McDermott J."/>
            <person name="Samudrala R."/>
            <person name="Wang J."/>
            <person name="Wong G.K.-S."/>
            <person name="Yang H."/>
        </authorList>
    </citation>
    <scope>NUCLEOTIDE SEQUENCE [LARGE SCALE GENOMIC DNA]</scope>
    <source>
        <strain>cv. Nipponbare</strain>
    </source>
</reference>
<reference key="8">
    <citation type="journal article" date="2003" name="Science">
        <title>Collection, mapping, and annotation of over 28,000 cDNA clones from japonica rice.</title>
        <authorList>
            <consortium name="The rice full-length cDNA consortium"/>
        </authorList>
    </citation>
    <scope>NUCLEOTIDE SEQUENCE [LARGE SCALE MRNA] OF 1115-1527</scope>
    <source>
        <strain>cv. Nipponbare</strain>
    </source>
</reference>
<reference key="9">
    <citation type="journal article" date="2014" name="Plant Mol. Biol.">
        <title>The MET1b gene encoding a maintenance DNA methyltransferase is indispensable for normal development in rice.</title>
        <authorList>
            <person name="Yamauchi T."/>
            <person name="Johzuka-Hisatomi Y."/>
            <person name="Terada R."/>
            <person name="Nakamura I."/>
            <person name="Iida S."/>
        </authorList>
    </citation>
    <scope>FUNCTION</scope>
    <scope>TISSUE SPECIFICITY</scope>
    <scope>DISRUPTION PHENOTYPE</scope>
</reference>